<keyword id="KW-0963">Cytoplasm</keyword>
<keyword id="KW-0488">Methylation</keyword>
<keyword id="KW-0648">Protein biosynthesis</keyword>
<evidence type="ECO:0000255" key="1">
    <source>
        <dbReference type="HAMAP-Rule" id="MF_00093"/>
    </source>
</evidence>
<dbReference type="EMBL" id="CP000570">
    <property type="protein sequence ID" value="ABN83520.1"/>
    <property type="molecule type" value="Genomic_DNA"/>
</dbReference>
<dbReference type="RefSeq" id="WP_004527811.1">
    <property type="nucleotide sequence ID" value="NC_009074.1"/>
</dbReference>
<dbReference type="SMR" id="A3NE24"/>
<dbReference type="GeneID" id="93061687"/>
<dbReference type="KEGG" id="bpd:BURPS668_3590"/>
<dbReference type="HOGENOM" id="CLU_036856_0_1_4"/>
<dbReference type="GO" id="GO:0005737">
    <property type="term" value="C:cytoplasm"/>
    <property type="evidence" value="ECO:0007669"/>
    <property type="project" value="UniProtKB-SubCell"/>
</dbReference>
<dbReference type="GO" id="GO:0016149">
    <property type="term" value="F:translation release factor activity, codon specific"/>
    <property type="evidence" value="ECO:0007669"/>
    <property type="project" value="UniProtKB-UniRule"/>
</dbReference>
<dbReference type="FunFam" id="3.30.160.20:FF:000004">
    <property type="entry name" value="Peptide chain release factor 1"/>
    <property type="match status" value="1"/>
</dbReference>
<dbReference type="FunFam" id="3.30.70.1660:FF:000002">
    <property type="entry name" value="Peptide chain release factor 1"/>
    <property type="match status" value="1"/>
</dbReference>
<dbReference type="FunFam" id="3.30.70.1660:FF:000004">
    <property type="entry name" value="Peptide chain release factor 1"/>
    <property type="match status" value="1"/>
</dbReference>
<dbReference type="Gene3D" id="3.30.160.20">
    <property type="match status" value="1"/>
</dbReference>
<dbReference type="Gene3D" id="3.30.70.1660">
    <property type="match status" value="1"/>
</dbReference>
<dbReference type="Gene3D" id="6.10.140.1950">
    <property type="match status" value="1"/>
</dbReference>
<dbReference type="HAMAP" id="MF_00093">
    <property type="entry name" value="Rel_fac_1"/>
    <property type="match status" value="1"/>
</dbReference>
<dbReference type="InterPro" id="IPR005139">
    <property type="entry name" value="PCRF"/>
</dbReference>
<dbReference type="InterPro" id="IPR000352">
    <property type="entry name" value="Pep_chain_release_fac_I"/>
</dbReference>
<dbReference type="InterPro" id="IPR045853">
    <property type="entry name" value="Pep_chain_release_fac_I_sf"/>
</dbReference>
<dbReference type="InterPro" id="IPR050057">
    <property type="entry name" value="Prokaryotic/Mito_RF"/>
</dbReference>
<dbReference type="InterPro" id="IPR004373">
    <property type="entry name" value="RF-1"/>
</dbReference>
<dbReference type="NCBIfam" id="TIGR00019">
    <property type="entry name" value="prfA"/>
    <property type="match status" value="1"/>
</dbReference>
<dbReference type="NCBIfam" id="NF001859">
    <property type="entry name" value="PRK00591.1"/>
    <property type="match status" value="1"/>
</dbReference>
<dbReference type="PANTHER" id="PTHR43804">
    <property type="entry name" value="LD18447P"/>
    <property type="match status" value="1"/>
</dbReference>
<dbReference type="PANTHER" id="PTHR43804:SF7">
    <property type="entry name" value="LD18447P"/>
    <property type="match status" value="1"/>
</dbReference>
<dbReference type="Pfam" id="PF03462">
    <property type="entry name" value="PCRF"/>
    <property type="match status" value="1"/>
</dbReference>
<dbReference type="Pfam" id="PF00472">
    <property type="entry name" value="RF-1"/>
    <property type="match status" value="1"/>
</dbReference>
<dbReference type="SMART" id="SM00937">
    <property type="entry name" value="PCRF"/>
    <property type="match status" value="1"/>
</dbReference>
<dbReference type="SUPFAM" id="SSF75620">
    <property type="entry name" value="Release factor"/>
    <property type="match status" value="1"/>
</dbReference>
<dbReference type="PROSITE" id="PS00745">
    <property type="entry name" value="RF_PROK_I"/>
    <property type="match status" value="1"/>
</dbReference>
<proteinExistence type="inferred from homology"/>
<name>RF1_BURP6</name>
<sequence length="360" mass="40484">MKTSMQSKLDQLTTRLAELNDLLSRENVTADLDQYRKLTREHAEIGPVVEHYAQWRQARADELAAQELLADASMRDFAEDELRGARDRMGRLAAELQTMLLPKDPNDERNIFVEIRAGTGGDESALFAGDLLRMYLRYAERQRWQVEMMSESPSDLGGYKEVIVRIAGYGAYSRLKFESGGHRVQRVPATETQGRIHTSACTVAVMPEADEIGEVEINPADLRIDTFRASGAGGQHINKTDSAVRVTHIPTGIVVECQDDRSQHKNKDRALKVLAARIKDKQYHEQHAKEAATRKSLIGSGDRSERIRTYNFPQGRMTDHRINLTLYKLEQIMDGDLDELIAALVSEHQAELLASLGDAE</sequence>
<protein>
    <recommendedName>
        <fullName evidence="1">Peptide chain release factor 1</fullName>
        <shortName evidence="1">RF-1</shortName>
    </recommendedName>
</protein>
<feature type="chain" id="PRO_1000004868" description="Peptide chain release factor 1">
    <location>
        <begin position="1"/>
        <end position="360"/>
    </location>
</feature>
<feature type="modified residue" description="N5-methylglutamine" evidence="1">
    <location>
        <position position="235"/>
    </location>
</feature>
<comment type="function">
    <text evidence="1">Peptide chain release factor 1 directs the termination of translation in response to the peptide chain termination codons UAG and UAA.</text>
</comment>
<comment type="subcellular location">
    <subcellularLocation>
        <location evidence="1">Cytoplasm</location>
    </subcellularLocation>
</comment>
<comment type="PTM">
    <text evidence="1">Methylated by PrmC. Methylation increases the termination efficiency of RF1.</text>
</comment>
<comment type="similarity">
    <text evidence="1">Belongs to the prokaryotic/mitochondrial release factor family.</text>
</comment>
<organism>
    <name type="scientific">Burkholderia pseudomallei (strain 668)</name>
    <dbReference type="NCBI Taxonomy" id="320373"/>
    <lineage>
        <taxon>Bacteria</taxon>
        <taxon>Pseudomonadati</taxon>
        <taxon>Pseudomonadota</taxon>
        <taxon>Betaproteobacteria</taxon>
        <taxon>Burkholderiales</taxon>
        <taxon>Burkholderiaceae</taxon>
        <taxon>Burkholderia</taxon>
        <taxon>pseudomallei group</taxon>
    </lineage>
</organism>
<accession>A3NE24</accession>
<gene>
    <name evidence="1" type="primary">prfA</name>
    <name type="ordered locus">BURPS668_3590</name>
</gene>
<reference key="1">
    <citation type="journal article" date="2010" name="Genome Biol. Evol.">
        <title>Continuing evolution of Burkholderia mallei through genome reduction and large-scale rearrangements.</title>
        <authorList>
            <person name="Losada L."/>
            <person name="Ronning C.M."/>
            <person name="DeShazer D."/>
            <person name="Woods D."/>
            <person name="Fedorova N."/>
            <person name="Kim H.S."/>
            <person name="Shabalina S.A."/>
            <person name="Pearson T.R."/>
            <person name="Brinkac L."/>
            <person name="Tan P."/>
            <person name="Nandi T."/>
            <person name="Crabtree J."/>
            <person name="Badger J."/>
            <person name="Beckstrom-Sternberg S."/>
            <person name="Saqib M."/>
            <person name="Schutzer S.E."/>
            <person name="Keim P."/>
            <person name="Nierman W.C."/>
        </authorList>
    </citation>
    <scope>NUCLEOTIDE SEQUENCE [LARGE SCALE GENOMIC DNA]</scope>
    <source>
        <strain>668</strain>
    </source>
</reference>